<proteinExistence type="evidence at transcript level"/>
<evidence type="ECO:0000250" key="1"/>
<evidence type="ECO:0000255" key="2"/>
<evidence type="ECO:0000255" key="3">
    <source>
        <dbReference type="PROSITE-ProRule" id="PRU00175"/>
    </source>
</evidence>
<evidence type="ECO:0000256" key="4">
    <source>
        <dbReference type="SAM" id="MobiDB-lite"/>
    </source>
</evidence>
<evidence type="ECO:0000269" key="5">
    <source>
    </source>
</evidence>
<evidence type="ECO:0000305" key="6"/>
<comment type="function">
    <text evidence="5">Mediates E2-dependent protein ubiquitination in vitro.</text>
</comment>
<comment type="catalytic activity">
    <reaction>
        <text>S-ubiquitinyl-[E2 ubiquitin-conjugating enzyme]-L-cysteine + [acceptor protein]-L-lysine = [E2 ubiquitin-conjugating enzyme]-L-cysteine + N(6)-ubiquitinyl-[acceptor protein]-L-lysine.</text>
        <dbReference type="EC" id="2.3.2.27"/>
    </reaction>
</comment>
<comment type="pathway">
    <text>Protein modification; protein ubiquitination.</text>
</comment>
<comment type="subcellular location">
    <subcellularLocation>
        <location evidence="6">Membrane</location>
        <topology evidence="6">Multi-pass membrane protein</topology>
    </subcellularLocation>
</comment>
<comment type="domain">
    <text evidence="1">The RING-type zinc finger domain mediates binding to an E2 ubiquitin-conjugating enzyme.</text>
</comment>
<comment type="sequence caution" evidence="6">
    <conflict type="erroneous gene model prediction">
        <sequence resource="EMBL-CDS" id="CAB39939"/>
    </conflict>
</comment>
<comment type="sequence caution" evidence="6">
    <conflict type="erroneous gene model prediction">
        <sequence resource="EMBL-CDS" id="CAB78211"/>
    </conflict>
</comment>
<reference key="1">
    <citation type="journal article" date="2005" name="Plant Physiol.">
        <title>Functional analysis of the RING-type ubiquitin ligase family of Arabidopsis.</title>
        <authorList>
            <person name="Stone S.L."/>
            <person name="Hauksdottir H."/>
            <person name="Troy A."/>
            <person name="Herschleb J."/>
            <person name="Kraft E."/>
            <person name="Callis J."/>
        </authorList>
    </citation>
    <scope>NUCLEOTIDE SEQUENCE [MRNA]</scope>
    <scope>FUNCTION</scope>
    <source>
        <strain>cv. Columbia</strain>
        <tissue>Seedling</tissue>
    </source>
</reference>
<reference key="2">
    <citation type="journal article" date="1999" name="Nature">
        <title>Sequence and analysis of chromosome 4 of the plant Arabidopsis thaliana.</title>
        <authorList>
            <person name="Mayer K.F.X."/>
            <person name="Schueller C."/>
            <person name="Wambutt R."/>
            <person name="Murphy G."/>
            <person name="Volckaert G."/>
            <person name="Pohl T."/>
            <person name="Duesterhoeft A."/>
            <person name="Stiekema W."/>
            <person name="Entian K.-D."/>
            <person name="Terryn N."/>
            <person name="Harris B."/>
            <person name="Ansorge W."/>
            <person name="Brandt P."/>
            <person name="Grivell L.A."/>
            <person name="Rieger M."/>
            <person name="Weichselgartner M."/>
            <person name="de Simone V."/>
            <person name="Obermaier B."/>
            <person name="Mache R."/>
            <person name="Mueller M."/>
            <person name="Kreis M."/>
            <person name="Delseny M."/>
            <person name="Puigdomenech P."/>
            <person name="Watson M."/>
            <person name="Schmidtheini T."/>
            <person name="Reichert B."/>
            <person name="Portetelle D."/>
            <person name="Perez-Alonso M."/>
            <person name="Boutry M."/>
            <person name="Bancroft I."/>
            <person name="Vos P."/>
            <person name="Hoheisel J."/>
            <person name="Zimmermann W."/>
            <person name="Wedler H."/>
            <person name="Ridley P."/>
            <person name="Langham S.-A."/>
            <person name="McCullagh B."/>
            <person name="Bilham L."/>
            <person name="Robben J."/>
            <person name="van der Schueren J."/>
            <person name="Grymonprez B."/>
            <person name="Chuang Y.-J."/>
            <person name="Vandenbussche F."/>
            <person name="Braeken M."/>
            <person name="Weltjens I."/>
            <person name="Voet M."/>
            <person name="Bastiaens I."/>
            <person name="Aert R."/>
            <person name="Defoor E."/>
            <person name="Weitzenegger T."/>
            <person name="Bothe G."/>
            <person name="Ramsperger U."/>
            <person name="Hilbert H."/>
            <person name="Braun M."/>
            <person name="Holzer E."/>
            <person name="Brandt A."/>
            <person name="Peters S."/>
            <person name="van Staveren M."/>
            <person name="Dirkse W."/>
            <person name="Mooijman P."/>
            <person name="Klein Lankhorst R."/>
            <person name="Rose M."/>
            <person name="Hauf J."/>
            <person name="Koetter P."/>
            <person name="Berneiser S."/>
            <person name="Hempel S."/>
            <person name="Feldpausch M."/>
            <person name="Lamberth S."/>
            <person name="Van den Daele H."/>
            <person name="De Keyser A."/>
            <person name="Buysshaert C."/>
            <person name="Gielen J."/>
            <person name="Villarroel R."/>
            <person name="De Clercq R."/>
            <person name="van Montagu M."/>
            <person name="Rogers J."/>
            <person name="Cronin A."/>
            <person name="Quail M.A."/>
            <person name="Bray-Allen S."/>
            <person name="Clark L."/>
            <person name="Doggett J."/>
            <person name="Hall S."/>
            <person name="Kay M."/>
            <person name="Lennard N."/>
            <person name="McLay K."/>
            <person name="Mayes R."/>
            <person name="Pettett A."/>
            <person name="Rajandream M.A."/>
            <person name="Lyne M."/>
            <person name="Benes V."/>
            <person name="Rechmann S."/>
            <person name="Borkova D."/>
            <person name="Bloecker H."/>
            <person name="Scharfe M."/>
            <person name="Grimm M."/>
            <person name="Loehnert T.-H."/>
            <person name="Dose S."/>
            <person name="de Haan M."/>
            <person name="Maarse A.C."/>
            <person name="Schaefer M."/>
            <person name="Mueller-Auer S."/>
            <person name="Gabel C."/>
            <person name="Fuchs M."/>
            <person name="Fartmann B."/>
            <person name="Granderath K."/>
            <person name="Dauner D."/>
            <person name="Herzl A."/>
            <person name="Neumann S."/>
            <person name="Argiriou A."/>
            <person name="Vitale D."/>
            <person name="Liguori R."/>
            <person name="Piravandi E."/>
            <person name="Massenet O."/>
            <person name="Quigley F."/>
            <person name="Clabauld G."/>
            <person name="Muendlein A."/>
            <person name="Felber R."/>
            <person name="Schnabl S."/>
            <person name="Hiller R."/>
            <person name="Schmidt W."/>
            <person name="Lecharny A."/>
            <person name="Aubourg S."/>
            <person name="Chefdor F."/>
            <person name="Cooke R."/>
            <person name="Berger C."/>
            <person name="Monfort A."/>
            <person name="Casacuberta E."/>
            <person name="Gibbons T."/>
            <person name="Weber N."/>
            <person name="Vandenbol M."/>
            <person name="Bargues M."/>
            <person name="Terol J."/>
            <person name="Torres A."/>
            <person name="Perez-Perez A."/>
            <person name="Purnelle B."/>
            <person name="Bent E."/>
            <person name="Johnson S."/>
            <person name="Tacon D."/>
            <person name="Jesse T."/>
            <person name="Heijnen L."/>
            <person name="Schwarz S."/>
            <person name="Scholler P."/>
            <person name="Heber S."/>
            <person name="Francs P."/>
            <person name="Bielke C."/>
            <person name="Frishman D."/>
            <person name="Haase D."/>
            <person name="Lemcke K."/>
            <person name="Mewes H.-W."/>
            <person name="Stocker S."/>
            <person name="Zaccaria P."/>
            <person name="Bevan M."/>
            <person name="Wilson R.K."/>
            <person name="de la Bastide M."/>
            <person name="Habermann K."/>
            <person name="Parnell L."/>
            <person name="Dedhia N."/>
            <person name="Gnoj L."/>
            <person name="Schutz K."/>
            <person name="Huang E."/>
            <person name="Spiegel L."/>
            <person name="Sekhon M."/>
            <person name="Murray J."/>
            <person name="Sheet P."/>
            <person name="Cordes M."/>
            <person name="Abu-Threideh J."/>
            <person name="Stoneking T."/>
            <person name="Kalicki J."/>
            <person name="Graves T."/>
            <person name="Harmon G."/>
            <person name="Edwards J."/>
            <person name="Latreille P."/>
            <person name="Courtney L."/>
            <person name="Cloud J."/>
            <person name="Abbott A."/>
            <person name="Scott K."/>
            <person name="Johnson D."/>
            <person name="Minx P."/>
            <person name="Bentley D."/>
            <person name="Fulton B."/>
            <person name="Miller N."/>
            <person name="Greco T."/>
            <person name="Kemp K."/>
            <person name="Kramer J."/>
            <person name="Fulton L."/>
            <person name="Mardis E."/>
            <person name="Dante M."/>
            <person name="Pepin K."/>
            <person name="Hillier L.W."/>
            <person name="Nelson J."/>
            <person name="Spieth J."/>
            <person name="Ryan E."/>
            <person name="Andrews S."/>
            <person name="Geisel C."/>
            <person name="Layman D."/>
            <person name="Du H."/>
            <person name="Ali J."/>
            <person name="Berghoff A."/>
            <person name="Jones K."/>
            <person name="Drone K."/>
            <person name="Cotton M."/>
            <person name="Joshu C."/>
            <person name="Antonoiu B."/>
            <person name="Zidanic M."/>
            <person name="Strong C."/>
            <person name="Sun H."/>
            <person name="Lamar B."/>
            <person name="Yordan C."/>
            <person name="Ma P."/>
            <person name="Zhong J."/>
            <person name="Preston R."/>
            <person name="Vil D."/>
            <person name="Shekher M."/>
            <person name="Matero A."/>
            <person name="Shah R."/>
            <person name="Swaby I.K."/>
            <person name="O'Shaughnessy A."/>
            <person name="Rodriguez M."/>
            <person name="Hoffman J."/>
            <person name="Till S."/>
            <person name="Granat S."/>
            <person name="Shohdy N."/>
            <person name="Hasegawa A."/>
            <person name="Hameed A."/>
            <person name="Lodhi M."/>
            <person name="Johnson A."/>
            <person name="Chen E."/>
            <person name="Marra M.A."/>
            <person name="Martienssen R."/>
            <person name="McCombie W.R."/>
        </authorList>
    </citation>
    <scope>NUCLEOTIDE SEQUENCE [LARGE SCALE GENOMIC DNA]</scope>
    <source>
        <strain>cv. Columbia</strain>
    </source>
</reference>
<reference key="3">
    <citation type="journal article" date="2017" name="Plant J.">
        <title>Araport11: a complete reannotation of the Arabidopsis thaliana reference genome.</title>
        <authorList>
            <person name="Cheng C.Y."/>
            <person name="Krishnakumar V."/>
            <person name="Chan A.P."/>
            <person name="Thibaud-Nissen F."/>
            <person name="Schobel S."/>
            <person name="Town C.D."/>
        </authorList>
    </citation>
    <scope>GENOME REANNOTATION</scope>
    <source>
        <strain>cv. Columbia</strain>
    </source>
</reference>
<reference key="4">
    <citation type="journal article" date="2003" name="Science">
        <title>Empirical analysis of transcriptional activity in the Arabidopsis genome.</title>
        <authorList>
            <person name="Yamada K."/>
            <person name="Lim J."/>
            <person name="Dale J.M."/>
            <person name="Chen H."/>
            <person name="Shinn P."/>
            <person name="Palm C.J."/>
            <person name="Southwick A.M."/>
            <person name="Wu H.C."/>
            <person name="Kim C.J."/>
            <person name="Nguyen M."/>
            <person name="Pham P.K."/>
            <person name="Cheuk R.F."/>
            <person name="Karlin-Newmann G."/>
            <person name="Liu S.X."/>
            <person name="Lam B."/>
            <person name="Sakano H."/>
            <person name="Wu T."/>
            <person name="Yu G."/>
            <person name="Miranda M."/>
            <person name="Quach H.L."/>
            <person name="Tripp M."/>
            <person name="Chang C.H."/>
            <person name="Lee J.M."/>
            <person name="Toriumi M.J."/>
            <person name="Chan M.M."/>
            <person name="Tang C.C."/>
            <person name="Onodera C.S."/>
            <person name="Deng J.M."/>
            <person name="Akiyama K."/>
            <person name="Ansari Y."/>
            <person name="Arakawa T."/>
            <person name="Banh J."/>
            <person name="Banno F."/>
            <person name="Bowser L."/>
            <person name="Brooks S.Y."/>
            <person name="Carninci P."/>
            <person name="Chao Q."/>
            <person name="Choy N."/>
            <person name="Enju A."/>
            <person name="Goldsmith A.D."/>
            <person name="Gurjal M."/>
            <person name="Hansen N.F."/>
            <person name="Hayashizaki Y."/>
            <person name="Johnson-Hopson C."/>
            <person name="Hsuan V.W."/>
            <person name="Iida K."/>
            <person name="Karnes M."/>
            <person name="Khan S."/>
            <person name="Koesema E."/>
            <person name="Ishida J."/>
            <person name="Jiang P.X."/>
            <person name="Jones T."/>
            <person name="Kawai J."/>
            <person name="Kamiya A."/>
            <person name="Meyers C."/>
            <person name="Nakajima M."/>
            <person name="Narusaka M."/>
            <person name="Seki M."/>
            <person name="Sakurai T."/>
            <person name="Satou M."/>
            <person name="Tamse R."/>
            <person name="Vaysberg M."/>
            <person name="Wallender E.K."/>
            <person name="Wong C."/>
            <person name="Yamamura Y."/>
            <person name="Yuan S."/>
            <person name="Shinozaki K."/>
            <person name="Davis R.W."/>
            <person name="Theologis A."/>
            <person name="Ecker J.R."/>
        </authorList>
    </citation>
    <scope>NUCLEOTIDE SEQUENCE [LARGE SCALE MRNA]</scope>
    <source>
        <strain>cv. Columbia</strain>
    </source>
</reference>
<reference key="5">
    <citation type="submission" date="2003-11" db="EMBL/GenBank/DDBJ databases">
        <authorList>
            <person name="Cheuk R.F."/>
            <person name="Chen H."/>
            <person name="Kim C.J."/>
            <person name="Shinn P."/>
            <person name="Carninci P."/>
            <person name="Hayashizaki Y."/>
            <person name="Ishida J."/>
            <person name="Kamiya A."/>
            <person name="Kawai J."/>
            <person name="Narusaka M."/>
            <person name="Sakurai T."/>
            <person name="Satou M."/>
            <person name="Seki M."/>
            <person name="Shinozaki K."/>
            <person name="Ecker J.R."/>
        </authorList>
    </citation>
    <scope>NUCLEOTIDE SEQUENCE [LARGE SCALE MRNA]</scope>
</reference>
<protein>
    <recommendedName>
        <fullName>E3 ubiquitin-protein ligase At4g11680</fullName>
        <ecNumber>2.3.2.27</ecNumber>
    </recommendedName>
    <alternativeName>
        <fullName>RING finger protein At4g11680</fullName>
    </alternativeName>
    <alternativeName>
        <fullName evidence="6">RING-type E3 ubiquitin transferase At4g11680</fullName>
    </alternativeName>
</protein>
<accession>Q93Z92</accession>
<accession>Q9T0D5</accession>
<organism>
    <name type="scientific">Arabidopsis thaliana</name>
    <name type="common">Mouse-ear cress</name>
    <dbReference type="NCBI Taxonomy" id="3702"/>
    <lineage>
        <taxon>Eukaryota</taxon>
        <taxon>Viridiplantae</taxon>
        <taxon>Streptophyta</taxon>
        <taxon>Embryophyta</taxon>
        <taxon>Tracheophyta</taxon>
        <taxon>Spermatophyta</taxon>
        <taxon>Magnoliopsida</taxon>
        <taxon>eudicotyledons</taxon>
        <taxon>Gunneridae</taxon>
        <taxon>Pentapetalae</taxon>
        <taxon>rosids</taxon>
        <taxon>malvids</taxon>
        <taxon>Brassicales</taxon>
        <taxon>Brassicaceae</taxon>
        <taxon>Camelineae</taxon>
        <taxon>Arabidopsis</taxon>
    </lineage>
</organism>
<gene>
    <name type="ordered locus">At4g11680</name>
    <name type="ORF">T5C23.110</name>
</gene>
<keyword id="KW-0472">Membrane</keyword>
<keyword id="KW-0479">Metal-binding</keyword>
<keyword id="KW-1185">Reference proteome</keyword>
<keyword id="KW-0808">Transferase</keyword>
<keyword id="KW-0812">Transmembrane</keyword>
<keyword id="KW-1133">Transmembrane helix</keyword>
<keyword id="KW-0833">Ubl conjugation pathway</keyword>
<keyword id="KW-0862">Zinc</keyword>
<keyword id="KW-0863">Zinc-finger</keyword>
<sequence length="390" mass="43741">MSSSSSTTTNTTTESDSSSLPTHIGRSNSDGIIDTTPFLPPTVTRTISVDEESNPIHRSARRQGLREAARFLRHAGSRRMMREPSMLVRETAAEQLEERQSDWAYSKPVVFLDILWNLAFVAIGVAVLILSRDEKPNMPLRVWVVGYGIQCWLHMACVCVEYRRRRRRRHPEDGGGSGLTNSSSQQYVSLAQLEDRGETSNPAKHLESANTMFSFIWWIIGFYWVSAGGQTLSSDSPQLYWLCIIFLGFDVFFVVFCVALACVIGLAVCCCLPCIIAILYAVADQEGASKNDIDQMPKFRFTKTGNVEKLSGKARGIMTECGTDSPIERSLSPEDAECCICLCEYEDGVELRELPCNHHFHCTCIDKWLHINSRCPLCKFNILKNANNEV</sequence>
<dbReference type="EC" id="2.3.2.27"/>
<dbReference type="EMBL" id="DQ059121">
    <property type="protein sequence ID" value="AAY57607.1"/>
    <property type="molecule type" value="mRNA"/>
</dbReference>
<dbReference type="EMBL" id="AL049500">
    <property type="protein sequence ID" value="CAB39939.1"/>
    <property type="status" value="ALT_SEQ"/>
    <property type="molecule type" value="Genomic_DNA"/>
</dbReference>
<dbReference type="EMBL" id="AL161532">
    <property type="protein sequence ID" value="CAB78211.1"/>
    <property type="status" value="ALT_SEQ"/>
    <property type="molecule type" value="Genomic_DNA"/>
</dbReference>
<dbReference type="EMBL" id="CP002687">
    <property type="protein sequence ID" value="AEE83038.1"/>
    <property type="molecule type" value="Genomic_DNA"/>
</dbReference>
<dbReference type="EMBL" id="AY057713">
    <property type="protein sequence ID" value="AAL15343.1"/>
    <property type="molecule type" value="mRNA"/>
</dbReference>
<dbReference type="EMBL" id="BT010750">
    <property type="protein sequence ID" value="AAR23720.1"/>
    <property type="molecule type" value="mRNA"/>
</dbReference>
<dbReference type="PIR" id="T04215">
    <property type="entry name" value="T04215"/>
</dbReference>
<dbReference type="RefSeq" id="NP_001329829.1">
    <property type="nucleotide sequence ID" value="NM_001340730.1"/>
</dbReference>
<dbReference type="RefSeq" id="NP_567379.1">
    <property type="nucleotide sequence ID" value="NM_117237.5"/>
</dbReference>
<dbReference type="SMR" id="Q93Z92"/>
<dbReference type="BioGRID" id="12071">
    <property type="interactions" value="1"/>
</dbReference>
<dbReference type="FunCoup" id="Q93Z92">
    <property type="interactions" value="14"/>
</dbReference>
<dbReference type="IntAct" id="Q93Z92">
    <property type="interactions" value="1"/>
</dbReference>
<dbReference type="STRING" id="3702.Q93Z92"/>
<dbReference type="iPTMnet" id="Q93Z92"/>
<dbReference type="PaxDb" id="3702-AT4G11680.1"/>
<dbReference type="ProteomicsDB" id="237006"/>
<dbReference type="EnsemblPlants" id="AT4G11680.1">
    <property type="protein sequence ID" value="AT4G11680.1"/>
    <property type="gene ID" value="AT4G11680"/>
</dbReference>
<dbReference type="GeneID" id="826773"/>
<dbReference type="Gramene" id="AT4G11680.1">
    <property type="protein sequence ID" value="AT4G11680.1"/>
    <property type="gene ID" value="AT4G11680"/>
</dbReference>
<dbReference type="KEGG" id="ath:AT4G11680"/>
<dbReference type="Araport" id="AT4G11680"/>
<dbReference type="TAIR" id="AT4G11680"/>
<dbReference type="eggNOG" id="KOG0800">
    <property type="taxonomic scope" value="Eukaryota"/>
</dbReference>
<dbReference type="HOGENOM" id="CLU_038211_0_1_1"/>
<dbReference type="InParanoid" id="Q93Z92"/>
<dbReference type="PhylomeDB" id="Q93Z92"/>
<dbReference type="UniPathway" id="UPA00143"/>
<dbReference type="PRO" id="PR:Q93Z92"/>
<dbReference type="Proteomes" id="UP000006548">
    <property type="component" value="Chromosome 4"/>
</dbReference>
<dbReference type="ExpressionAtlas" id="Q93Z92">
    <property type="expression patterns" value="baseline and differential"/>
</dbReference>
<dbReference type="GO" id="GO:0016020">
    <property type="term" value="C:membrane"/>
    <property type="evidence" value="ECO:0007669"/>
    <property type="project" value="UniProtKB-SubCell"/>
</dbReference>
<dbReference type="GO" id="GO:0000325">
    <property type="term" value="C:plant-type vacuole"/>
    <property type="evidence" value="ECO:0007005"/>
    <property type="project" value="TAIR"/>
</dbReference>
<dbReference type="GO" id="GO:0016740">
    <property type="term" value="F:transferase activity"/>
    <property type="evidence" value="ECO:0007669"/>
    <property type="project" value="UniProtKB-KW"/>
</dbReference>
<dbReference type="GO" id="GO:0008270">
    <property type="term" value="F:zinc ion binding"/>
    <property type="evidence" value="ECO:0007669"/>
    <property type="project" value="UniProtKB-KW"/>
</dbReference>
<dbReference type="GO" id="GO:0016567">
    <property type="term" value="P:protein ubiquitination"/>
    <property type="evidence" value="ECO:0007669"/>
    <property type="project" value="UniProtKB-UniPathway"/>
</dbReference>
<dbReference type="Gene3D" id="3.30.40.10">
    <property type="entry name" value="Zinc/RING finger domain, C3HC4 (zinc finger)"/>
    <property type="match status" value="1"/>
</dbReference>
<dbReference type="InterPro" id="IPR001841">
    <property type="entry name" value="Znf_RING"/>
</dbReference>
<dbReference type="InterPro" id="IPR013083">
    <property type="entry name" value="Znf_RING/FYVE/PHD"/>
</dbReference>
<dbReference type="PANTHER" id="PTHR45977:SF16">
    <property type="entry name" value="RING-TYPE DOMAIN-CONTAINING PROTEIN"/>
    <property type="match status" value="1"/>
</dbReference>
<dbReference type="PANTHER" id="PTHR45977">
    <property type="entry name" value="TARGET OF ERK KINASE MPK-1"/>
    <property type="match status" value="1"/>
</dbReference>
<dbReference type="Pfam" id="PF13639">
    <property type="entry name" value="zf-RING_2"/>
    <property type="match status" value="1"/>
</dbReference>
<dbReference type="SMART" id="SM00184">
    <property type="entry name" value="RING"/>
    <property type="match status" value="1"/>
</dbReference>
<dbReference type="SUPFAM" id="SSF57850">
    <property type="entry name" value="RING/U-box"/>
    <property type="match status" value="1"/>
</dbReference>
<dbReference type="PROSITE" id="PS50089">
    <property type="entry name" value="ZF_RING_2"/>
    <property type="match status" value="1"/>
</dbReference>
<name>RING4_ARATH</name>
<feature type="chain" id="PRO_0000271544" description="E3 ubiquitin-protein ligase At4g11680">
    <location>
        <begin position="1"/>
        <end position="390"/>
    </location>
</feature>
<feature type="transmembrane region" description="Helical" evidence="2">
    <location>
        <begin position="109"/>
        <end position="129"/>
    </location>
</feature>
<feature type="transmembrane region" description="Helical" evidence="2">
    <location>
        <begin position="142"/>
        <end position="162"/>
    </location>
</feature>
<feature type="transmembrane region" description="Helical" evidence="2">
    <location>
        <begin position="212"/>
        <end position="232"/>
    </location>
</feature>
<feature type="transmembrane region" description="Helical" evidence="2">
    <location>
        <begin position="244"/>
        <end position="264"/>
    </location>
</feature>
<feature type="transmembrane region" description="Helical" evidence="2">
    <location>
        <begin position="265"/>
        <end position="285"/>
    </location>
</feature>
<feature type="zinc finger region" description="RING-type; atypical" evidence="3">
    <location>
        <begin position="338"/>
        <end position="379"/>
    </location>
</feature>
<feature type="region of interest" description="Disordered" evidence="4">
    <location>
        <begin position="1"/>
        <end position="39"/>
    </location>
</feature>
<feature type="compositionally biased region" description="Low complexity" evidence="4">
    <location>
        <begin position="1"/>
        <end position="19"/>
    </location>
</feature>